<reference key="1">
    <citation type="journal article" date="2005" name="Genome Res.">
        <title>Coping with cold: the genome of the versatile marine Antarctica bacterium Pseudoalteromonas haloplanktis TAC125.</title>
        <authorList>
            <person name="Medigue C."/>
            <person name="Krin E."/>
            <person name="Pascal G."/>
            <person name="Barbe V."/>
            <person name="Bernsel A."/>
            <person name="Bertin P.N."/>
            <person name="Cheung F."/>
            <person name="Cruveiller S."/>
            <person name="D'Amico S."/>
            <person name="Duilio A."/>
            <person name="Fang G."/>
            <person name="Feller G."/>
            <person name="Ho C."/>
            <person name="Mangenot S."/>
            <person name="Marino G."/>
            <person name="Nilsson J."/>
            <person name="Parrilli E."/>
            <person name="Rocha E.P.C."/>
            <person name="Rouy Z."/>
            <person name="Sekowska A."/>
            <person name="Tutino M.L."/>
            <person name="Vallenet D."/>
            <person name="von Heijne G."/>
            <person name="Danchin A."/>
        </authorList>
    </citation>
    <scope>NUCLEOTIDE SEQUENCE [LARGE SCALE GENOMIC DNA]</scope>
    <source>
        <strain>TAC 125</strain>
    </source>
</reference>
<sequence length="187" mass="20450">MSDQSTIAAAITCLAQGEVILYPTEAVYGLGCDPDNQQAVERLLAIKQRPVEKGLILIADNYGQLLKYVDDAKIPMDKRADIFSSWPNAITWVMPAAKNTPKWLTGQYDTIAVRVTNHPTVKRLCQEFGKPLVSTSANLSGQNTVLSIAEAKSQFTEQIGYYVDEPLGGNTQPSTIKDAMNGKVFRG</sequence>
<proteinExistence type="inferred from homology"/>
<feature type="chain" id="PRO_0000352947" description="Threonylcarbamoyl-AMP synthase">
    <location>
        <begin position="1"/>
        <end position="187"/>
    </location>
</feature>
<feature type="domain" description="YrdC-like" evidence="1">
    <location>
        <begin position="4"/>
        <end position="187"/>
    </location>
</feature>
<evidence type="ECO:0000255" key="1">
    <source>
        <dbReference type="HAMAP-Rule" id="MF_01852"/>
    </source>
</evidence>
<organism>
    <name type="scientific">Pseudoalteromonas translucida (strain TAC 125)</name>
    <dbReference type="NCBI Taxonomy" id="326442"/>
    <lineage>
        <taxon>Bacteria</taxon>
        <taxon>Pseudomonadati</taxon>
        <taxon>Pseudomonadota</taxon>
        <taxon>Gammaproteobacteria</taxon>
        <taxon>Alteromonadales</taxon>
        <taxon>Pseudoalteromonadaceae</taxon>
        <taxon>Pseudoalteromonas</taxon>
    </lineage>
</organism>
<dbReference type="EC" id="2.7.7.87" evidence="1"/>
<dbReference type="EMBL" id="CR954246">
    <property type="protein sequence ID" value="CAI85142.1"/>
    <property type="molecule type" value="Genomic_DNA"/>
</dbReference>
<dbReference type="SMR" id="Q3IDH7"/>
<dbReference type="STRING" id="326442.PSHAa0028"/>
<dbReference type="KEGG" id="pha:PSHAa0028"/>
<dbReference type="PATRIC" id="fig|326442.8.peg.30"/>
<dbReference type="eggNOG" id="COG0009">
    <property type="taxonomic scope" value="Bacteria"/>
</dbReference>
<dbReference type="HOGENOM" id="CLU_031397_6_0_6"/>
<dbReference type="BioCyc" id="PHAL326442:PSHA_RS00140-MONOMER"/>
<dbReference type="Proteomes" id="UP000006843">
    <property type="component" value="Chromosome I"/>
</dbReference>
<dbReference type="GO" id="GO:0005737">
    <property type="term" value="C:cytoplasm"/>
    <property type="evidence" value="ECO:0007669"/>
    <property type="project" value="UniProtKB-SubCell"/>
</dbReference>
<dbReference type="GO" id="GO:0005524">
    <property type="term" value="F:ATP binding"/>
    <property type="evidence" value="ECO:0007669"/>
    <property type="project" value="UniProtKB-UniRule"/>
</dbReference>
<dbReference type="GO" id="GO:0003725">
    <property type="term" value="F:double-stranded RNA binding"/>
    <property type="evidence" value="ECO:0007669"/>
    <property type="project" value="InterPro"/>
</dbReference>
<dbReference type="GO" id="GO:0061710">
    <property type="term" value="F:L-threonylcarbamoyladenylate synthase"/>
    <property type="evidence" value="ECO:0007669"/>
    <property type="project" value="UniProtKB-EC"/>
</dbReference>
<dbReference type="GO" id="GO:0000049">
    <property type="term" value="F:tRNA binding"/>
    <property type="evidence" value="ECO:0007669"/>
    <property type="project" value="TreeGrafter"/>
</dbReference>
<dbReference type="GO" id="GO:0006450">
    <property type="term" value="P:regulation of translational fidelity"/>
    <property type="evidence" value="ECO:0007669"/>
    <property type="project" value="TreeGrafter"/>
</dbReference>
<dbReference type="GO" id="GO:0002949">
    <property type="term" value="P:tRNA threonylcarbamoyladenosine modification"/>
    <property type="evidence" value="ECO:0007669"/>
    <property type="project" value="UniProtKB-UniRule"/>
</dbReference>
<dbReference type="FunFam" id="3.90.870.10:FF:000004">
    <property type="entry name" value="Threonylcarbamoyl-AMP synthase"/>
    <property type="match status" value="1"/>
</dbReference>
<dbReference type="Gene3D" id="3.90.870.10">
    <property type="entry name" value="DHBP synthase"/>
    <property type="match status" value="1"/>
</dbReference>
<dbReference type="HAMAP" id="MF_01852">
    <property type="entry name" value="TsaC"/>
    <property type="match status" value="1"/>
</dbReference>
<dbReference type="InterPro" id="IPR017945">
    <property type="entry name" value="DHBP_synth_RibB-like_a/b_dom"/>
</dbReference>
<dbReference type="InterPro" id="IPR006070">
    <property type="entry name" value="Sua5-like_dom"/>
</dbReference>
<dbReference type="InterPro" id="IPR023535">
    <property type="entry name" value="TC-AMP_synthase"/>
</dbReference>
<dbReference type="InterPro" id="IPR050156">
    <property type="entry name" value="TC-AMP_synthase_SUA5"/>
</dbReference>
<dbReference type="NCBIfam" id="TIGR00057">
    <property type="entry name" value="L-threonylcarbamoyladenylate synthase"/>
    <property type="match status" value="1"/>
</dbReference>
<dbReference type="PANTHER" id="PTHR17490">
    <property type="entry name" value="SUA5"/>
    <property type="match status" value="1"/>
</dbReference>
<dbReference type="PANTHER" id="PTHR17490:SF18">
    <property type="entry name" value="THREONYLCARBAMOYL-AMP SYNTHASE"/>
    <property type="match status" value="1"/>
</dbReference>
<dbReference type="Pfam" id="PF01300">
    <property type="entry name" value="Sua5_yciO_yrdC"/>
    <property type="match status" value="1"/>
</dbReference>
<dbReference type="SUPFAM" id="SSF55821">
    <property type="entry name" value="YrdC/RibB"/>
    <property type="match status" value="1"/>
</dbReference>
<dbReference type="PROSITE" id="PS51163">
    <property type="entry name" value="YRDC"/>
    <property type="match status" value="1"/>
</dbReference>
<accession>Q3IDH7</accession>
<gene>
    <name evidence="1" type="primary">tsaC</name>
    <name type="synonym">rimN</name>
    <name type="ordered locus">PSHAa0028</name>
</gene>
<protein>
    <recommendedName>
        <fullName evidence="1">Threonylcarbamoyl-AMP synthase</fullName>
        <shortName evidence="1">TC-AMP synthase</shortName>
        <ecNumber evidence="1">2.7.7.87</ecNumber>
    </recommendedName>
    <alternativeName>
        <fullName evidence="1">L-threonylcarbamoyladenylate synthase</fullName>
    </alternativeName>
    <alternativeName>
        <fullName evidence="1">t(6)A37 threonylcarbamoyladenosine biosynthesis protein TsaC</fullName>
    </alternativeName>
    <alternativeName>
        <fullName evidence="1">tRNA threonylcarbamoyladenosine biosynthesis protein TsaC</fullName>
    </alternativeName>
</protein>
<name>TSAC_PSET1</name>
<comment type="function">
    <text evidence="1">Required for the formation of a threonylcarbamoyl group on adenosine at position 37 (t(6)A37) in tRNAs that read codons beginning with adenine. Catalyzes the conversion of L-threonine, HCO(3)(-)/CO(2) and ATP to give threonylcarbamoyl-AMP (TC-AMP) as the acyladenylate intermediate, with the release of diphosphate.</text>
</comment>
<comment type="catalytic activity">
    <reaction evidence="1">
        <text>L-threonine + hydrogencarbonate + ATP = L-threonylcarbamoyladenylate + diphosphate + H2O</text>
        <dbReference type="Rhea" id="RHEA:36407"/>
        <dbReference type="ChEBI" id="CHEBI:15377"/>
        <dbReference type="ChEBI" id="CHEBI:17544"/>
        <dbReference type="ChEBI" id="CHEBI:30616"/>
        <dbReference type="ChEBI" id="CHEBI:33019"/>
        <dbReference type="ChEBI" id="CHEBI:57926"/>
        <dbReference type="ChEBI" id="CHEBI:73682"/>
        <dbReference type="EC" id="2.7.7.87"/>
    </reaction>
</comment>
<comment type="subcellular location">
    <subcellularLocation>
        <location evidence="1">Cytoplasm</location>
    </subcellularLocation>
</comment>
<comment type="similarity">
    <text evidence="1">Belongs to the SUA5 family. TsaC subfamily.</text>
</comment>
<keyword id="KW-0067">ATP-binding</keyword>
<keyword id="KW-0963">Cytoplasm</keyword>
<keyword id="KW-0547">Nucleotide-binding</keyword>
<keyword id="KW-0548">Nucleotidyltransferase</keyword>
<keyword id="KW-1185">Reference proteome</keyword>
<keyword id="KW-0808">Transferase</keyword>
<keyword id="KW-0819">tRNA processing</keyword>